<organism>
    <name type="scientific">Mycobacterium tuberculosis (strain ATCC 25618 / H37Rv)</name>
    <dbReference type="NCBI Taxonomy" id="83332"/>
    <lineage>
        <taxon>Bacteria</taxon>
        <taxon>Bacillati</taxon>
        <taxon>Actinomycetota</taxon>
        <taxon>Actinomycetes</taxon>
        <taxon>Mycobacteriales</taxon>
        <taxon>Mycobacteriaceae</taxon>
        <taxon>Mycobacterium</taxon>
        <taxon>Mycobacterium tuberculosis complex</taxon>
    </lineage>
</organism>
<feature type="chain" id="PRO_0000103938" description="Antitoxin VapB15">
    <location>
        <begin position="1"/>
        <end position="80"/>
    </location>
</feature>
<feature type="region of interest" description="Disordered" evidence="1">
    <location>
        <begin position="60"/>
        <end position="80"/>
    </location>
</feature>
<feature type="compositionally biased region" description="Basic and acidic residues" evidence="1">
    <location>
        <begin position="71"/>
        <end position="80"/>
    </location>
</feature>
<feature type="binding site" evidence="3">
    <location>
        <position position="67"/>
    </location>
    <ligand>
        <name>Mg(2+)</name>
        <dbReference type="ChEBI" id="CHEBI:18420"/>
        <note>ligand shared with toxin</note>
    </ligand>
</feature>
<feature type="binding site" evidence="3">
    <location>
        <position position="67"/>
    </location>
    <ligand>
        <name>Mn(2+)</name>
        <dbReference type="ChEBI" id="CHEBI:29035"/>
        <note>ligand shared with toxin</note>
    </ligand>
</feature>
<feature type="helix" evidence="6">
    <location>
        <begin position="48"/>
        <end position="52"/>
    </location>
</feature>
<feature type="turn" evidence="6">
    <location>
        <begin position="53"/>
        <end position="56"/>
    </location>
</feature>
<feature type="helix" evidence="6">
    <location>
        <begin position="63"/>
        <end position="67"/>
    </location>
</feature>
<gene>
    <name type="primary">vapB15</name>
    <name type="ordered locus">Rv2009</name>
    <name type="ORF">MTCY39.08c</name>
</gene>
<protein>
    <recommendedName>
        <fullName evidence="4">Antitoxin VapB15</fullName>
    </recommendedName>
</protein>
<proteinExistence type="evidence at protein level"/>
<keyword id="KW-0002">3D-structure</keyword>
<keyword id="KW-0460">Magnesium</keyword>
<keyword id="KW-0464">Manganese</keyword>
<keyword id="KW-0479">Metal-binding</keyword>
<keyword id="KW-1185">Reference proteome</keyword>
<keyword id="KW-1277">Toxin-antitoxin system</keyword>
<comment type="function">
    <text evidence="2 3 5">Antitoxin component of a type II toxin-antitoxin (TA) system. Upon expression in M.smegmatis neutralizes the effect of cognate toxin VapC15 (PubMed:20011113). Partially inhibits the RNase activity of VapC15 (PubMed:25450593).</text>
</comment>
<comment type="cofactor">
    <cofactor evidence="3">
        <name>Mg(2+)</name>
        <dbReference type="ChEBI" id="CHEBI:18420"/>
    </cofactor>
    <text evidence="3">The heterotrimer binds 1 Mg(2+)-Mn(2+) pair while the heterotetramer binds 2 pairs. Both metals are shared by the toxin-antitoxin pair.</text>
</comment>
<comment type="cofactor">
    <cofactor evidence="3">
        <name>Mn(2+)</name>
        <dbReference type="ChEBI" id="CHEBI:29035"/>
    </cofactor>
    <text evidence="3">The heterotrimer binds 1 Mg(2+)-Mn(2+) pair while the heterotetramer binds 2 pairs. Both metals are shared by the toxin-antitoxin pair.</text>
</comment>
<comment type="subunit">
    <text evidence="3">Crystallizes as a VapB15-VapC15(2) heterotrimer and as a VapB15(2)-VapC15(2) heterotetramer; each toxin pair forms a homodimer which creates a channel in which the antitoxin binds.</text>
</comment>
<comment type="induction">
    <text evidence="2">Induced by hypoxia.</text>
</comment>
<sequence length="80" mass="8884">MYSGVVSRTNIEIDDELVAAAQRMYRLDSKRSAVDLALRRLVGEPLGRDEALALQGSGFDFSNDEIESFSDTDRKLADES</sequence>
<evidence type="ECO:0000256" key="1">
    <source>
        <dbReference type="SAM" id="MobiDB-lite"/>
    </source>
</evidence>
<evidence type="ECO:0000269" key="2">
    <source>
    </source>
</evidence>
<evidence type="ECO:0000269" key="3">
    <source>
    </source>
</evidence>
<evidence type="ECO:0000303" key="4">
    <source>
    </source>
</evidence>
<evidence type="ECO:0000305" key="5">
    <source>
    </source>
</evidence>
<evidence type="ECO:0007829" key="6">
    <source>
        <dbReference type="PDB" id="4CHG"/>
    </source>
</evidence>
<dbReference type="EMBL" id="AL123456">
    <property type="protein sequence ID" value="CCP44781.1"/>
    <property type="molecule type" value="Genomic_DNA"/>
</dbReference>
<dbReference type="PIR" id="G70759">
    <property type="entry name" value="G70759"/>
</dbReference>
<dbReference type="RefSeq" id="NP_216525.1">
    <property type="nucleotide sequence ID" value="NC_000962.3"/>
</dbReference>
<dbReference type="RefSeq" id="WP_003899127.1">
    <property type="nucleotide sequence ID" value="NC_000962.3"/>
</dbReference>
<dbReference type="PDB" id="4CHG">
    <property type="method" value="X-ray"/>
    <property type="resolution" value="2.10 A"/>
    <property type="chains" value="G/H/I/J=1-80"/>
</dbReference>
<dbReference type="PDBsum" id="4CHG"/>
<dbReference type="SMR" id="P9WLM7"/>
<dbReference type="STRING" id="83332.Rv2009"/>
<dbReference type="PaxDb" id="83332-Rv2009"/>
<dbReference type="DNASU" id="888925"/>
<dbReference type="GeneID" id="888925"/>
<dbReference type="KEGG" id="mtu:Rv2009"/>
<dbReference type="KEGG" id="mtv:RVBD_2009"/>
<dbReference type="TubercuList" id="Rv2009"/>
<dbReference type="eggNOG" id="COG5450">
    <property type="taxonomic scope" value="Bacteria"/>
</dbReference>
<dbReference type="InParanoid" id="P9WLM7"/>
<dbReference type="OrthoDB" id="4563074at2"/>
<dbReference type="PhylomeDB" id="P9WLM7"/>
<dbReference type="Proteomes" id="UP000001584">
    <property type="component" value="Chromosome"/>
</dbReference>
<dbReference type="GO" id="GO:0046872">
    <property type="term" value="F:metal ion binding"/>
    <property type="evidence" value="ECO:0007669"/>
    <property type="project" value="UniProtKB-KW"/>
</dbReference>
<dbReference type="GO" id="GO:0045927">
    <property type="term" value="P:positive regulation of growth"/>
    <property type="evidence" value="ECO:0000315"/>
    <property type="project" value="MTBBASE"/>
</dbReference>
<dbReference type="GO" id="GO:0001666">
    <property type="term" value="P:response to hypoxia"/>
    <property type="evidence" value="ECO:0000270"/>
    <property type="project" value="MTBBASE"/>
</dbReference>
<dbReference type="InterPro" id="IPR019239">
    <property type="entry name" value="VapB_antitoxin"/>
</dbReference>
<dbReference type="Pfam" id="PF09957">
    <property type="entry name" value="VapB_antitoxin"/>
    <property type="match status" value="1"/>
</dbReference>
<accession>P9WLM7</accession>
<accession>L0T9X2</accession>
<accession>Q10848</accession>
<reference key="1">
    <citation type="journal article" date="1998" name="Nature">
        <title>Deciphering the biology of Mycobacterium tuberculosis from the complete genome sequence.</title>
        <authorList>
            <person name="Cole S.T."/>
            <person name="Brosch R."/>
            <person name="Parkhill J."/>
            <person name="Garnier T."/>
            <person name="Churcher C.M."/>
            <person name="Harris D.E."/>
            <person name="Gordon S.V."/>
            <person name="Eiglmeier K."/>
            <person name="Gas S."/>
            <person name="Barry C.E. III"/>
            <person name="Tekaia F."/>
            <person name="Badcock K."/>
            <person name="Basham D."/>
            <person name="Brown D."/>
            <person name="Chillingworth T."/>
            <person name="Connor R."/>
            <person name="Davies R.M."/>
            <person name="Devlin K."/>
            <person name="Feltwell T."/>
            <person name="Gentles S."/>
            <person name="Hamlin N."/>
            <person name="Holroyd S."/>
            <person name="Hornsby T."/>
            <person name="Jagels K."/>
            <person name="Krogh A."/>
            <person name="McLean J."/>
            <person name="Moule S."/>
            <person name="Murphy L.D."/>
            <person name="Oliver S."/>
            <person name="Osborne J."/>
            <person name="Quail M.A."/>
            <person name="Rajandream M.A."/>
            <person name="Rogers J."/>
            <person name="Rutter S."/>
            <person name="Seeger K."/>
            <person name="Skelton S."/>
            <person name="Squares S."/>
            <person name="Squares R."/>
            <person name="Sulston J.E."/>
            <person name="Taylor K."/>
            <person name="Whitehead S."/>
            <person name="Barrell B.G."/>
        </authorList>
    </citation>
    <scope>NUCLEOTIDE SEQUENCE [LARGE SCALE GENOMIC DNA]</scope>
    <source>
        <strain>ATCC 25618 / H37Rv</strain>
    </source>
</reference>
<reference key="2">
    <citation type="journal article" date="2005" name="Nucleic Acids Res.">
        <title>Toxin-antitoxin loci are highly abundant in free-living but lost from host-associated prokaryotes.</title>
        <authorList>
            <person name="Pandey D.P."/>
            <person name="Gerdes K."/>
        </authorList>
    </citation>
    <scope>POSSIBLE FUNCTION</scope>
    <source>
        <strain>ATCC 25618 / H37Rv</strain>
    </source>
</reference>
<reference key="3">
    <citation type="journal article" date="2009" name="PLoS Genet.">
        <title>Comprehensive functional analysis of Mycobacterium tuberculosis toxin-antitoxin systems: implications for pathogenesis, stress responses, and evolution.</title>
        <authorList>
            <person name="Ramage H.R."/>
            <person name="Connolly L.E."/>
            <person name="Cox J.S."/>
        </authorList>
    </citation>
    <scope>EXPRESSION IN M.SMEGMATIS</scope>
    <scope>FUNCTION AS AN ANTITOXIN</scope>
    <scope>INDUCTION BY HYPOXIA</scope>
    <source>
        <strain>ATCC 35801 / TMC 107 / Erdman</strain>
    </source>
</reference>
<reference key="4">
    <citation type="journal article" date="2014" name="J. Struct. Biol.">
        <title>Crystal structure of the VapBC-15 complex from Mycobacterium tuberculosis reveals a two-metal ion dependent PIN-domain ribonuclease and a variable mode of toxin-antitoxin assembly.</title>
        <authorList>
            <person name="Das U."/>
            <person name="Pogenberg V."/>
            <person name="Subhramanyam U.K."/>
            <person name="Wilmanns M."/>
            <person name="Gourinath S."/>
            <person name="Srinivasan A."/>
        </authorList>
    </citation>
    <scope>X-RAY CRYSTALLOGRAPHY (2.1 ANGSTROMS) IN COMPLEX WITH VAPC15; MAGNESIUM AND MANGANESE</scope>
    <scope>FUNCTION</scope>
    <scope>COFACTOR</scope>
    <scope>SUBUNIT</scope>
    <source>
        <strain>H37Rv</strain>
    </source>
</reference>
<name>VPB15_MYCTU</name>